<protein>
    <recommendedName>
        <fullName evidence="1">Undecaprenyl-diphosphatase 2</fullName>
        <ecNumber evidence="1">3.6.1.27</ecNumber>
    </recommendedName>
    <alternativeName>
        <fullName evidence="1">Bacitracin resistance protein 2</fullName>
    </alternativeName>
    <alternativeName>
        <fullName evidence="1">Undecaprenyl pyrophosphate phosphatase 2</fullName>
    </alternativeName>
</protein>
<sequence length="267" mass="29158">MDLIYFIKAFFLGVIEGITEFLPISSTGHLILIGDWINFSSNEEKVFEVVIQLGGILAVCWLFRDKIINLINGVLKSDPVAQRFAVIVMISFLPSAIIGALFIHDIKNVLFNTTVVATALIVGGLIILWVENRKDSEKFKIENIEKIGFKQAIIIGIAQCIAMIPGTSRSGATIVGGMLSGVSRKAATEYSFFLAIPTMLGAAIYDASKNYHLLNTDDILAILIGFSAAFISALIVVNALIRFVAKHSLSVFAWYRIALGLIIFSVN</sequence>
<name>UPPP2_SHEON</name>
<accession>Q8E9K1</accession>
<proteinExistence type="inferred from homology"/>
<gene>
    <name evidence="1" type="primary">uppP2</name>
    <name type="synonym">bacA2</name>
    <name type="synonym">upk2</name>
    <name type="ordered locus">SO_4274</name>
</gene>
<dbReference type="EC" id="3.6.1.27" evidence="1"/>
<dbReference type="EMBL" id="AE014299">
    <property type="protein sequence ID" value="AAN57243.1"/>
    <property type="molecule type" value="Genomic_DNA"/>
</dbReference>
<dbReference type="RefSeq" id="NP_719799.1">
    <property type="nucleotide sequence ID" value="NC_004347.2"/>
</dbReference>
<dbReference type="RefSeq" id="WP_011073940.1">
    <property type="nucleotide sequence ID" value="NC_004347.2"/>
</dbReference>
<dbReference type="SMR" id="Q8E9K1"/>
<dbReference type="STRING" id="211586.SO_4274"/>
<dbReference type="PaxDb" id="211586-SO_4274"/>
<dbReference type="KEGG" id="son:SO_4274"/>
<dbReference type="PATRIC" id="fig|1028802.3.peg.1107"/>
<dbReference type="eggNOG" id="COG1968">
    <property type="taxonomic scope" value="Bacteria"/>
</dbReference>
<dbReference type="HOGENOM" id="CLU_060296_2_0_6"/>
<dbReference type="OrthoDB" id="9808289at2"/>
<dbReference type="PhylomeDB" id="Q8E9K1"/>
<dbReference type="BioCyc" id="SONE211586:G1GMP-3947-MONOMER"/>
<dbReference type="Proteomes" id="UP000008186">
    <property type="component" value="Chromosome"/>
</dbReference>
<dbReference type="GO" id="GO:0005886">
    <property type="term" value="C:plasma membrane"/>
    <property type="evidence" value="ECO:0000318"/>
    <property type="project" value="GO_Central"/>
</dbReference>
<dbReference type="GO" id="GO:0050380">
    <property type="term" value="F:undecaprenyl-diphosphatase activity"/>
    <property type="evidence" value="ECO:0000318"/>
    <property type="project" value="GO_Central"/>
</dbReference>
<dbReference type="GO" id="GO:0071555">
    <property type="term" value="P:cell wall organization"/>
    <property type="evidence" value="ECO:0007669"/>
    <property type="project" value="UniProtKB-KW"/>
</dbReference>
<dbReference type="GO" id="GO:0009252">
    <property type="term" value="P:peptidoglycan biosynthetic process"/>
    <property type="evidence" value="ECO:0007669"/>
    <property type="project" value="UniProtKB-KW"/>
</dbReference>
<dbReference type="GO" id="GO:0000270">
    <property type="term" value="P:peptidoglycan metabolic process"/>
    <property type="evidence" value="ECO:0000318"/>
    <property type="project" value="GO_Central"/>
</dbReference>
<dbReference type="GO" id="GO:0008360">
    <property type="term" value="P:regulation of cell shape"/>
    <property type="evidence" value="ECO:0007669"/>
    <property type="project" value="UniProtKB-KW"/>
</dbReference>
<dbReference type="GO" id="GO:0046677">
    <property type="term" value="P:response to antibiotic"/>
    <property type="evidence" value="ECO:0007669"/>
    <property type="project" value="UniProtKB-UniRule"/>
</dbReference>
<dbReference type="HAMAP" id="MF_01006">
    <property type="entry name" value="Undec_diphosphatase"/>
    <property type="match status" value="1"/>
</dbReference>
<dbReference type="InterPro" id="IPR003824">
    <property type="entry name" value="UppP"/>
</dbReference>
<dbReference type="NCBIfam" id="NF001389">
    <property type="entry name" value="PRK00281.1-2"/>
    <property type="match status" value="1"/>
</dbReference>
<dbReference type="NCBIfam" id="NF001390">
    <property type="entry name" value="PRK00281.1-4"/>
    <property type="match status" value="1"/>
</dbReference>
<dbReference type="NCBIfam" id="TIGR00753">
    <property type="entry name" value="undec_PP_bacA"/>
    <property type="match status" value="1"/>
</dbReference>
<dbReference type="PANTHER" id="PTHR30622">
    <property type="entry name" value="UNDECAPRENYL-DIPHOSPHATASE"/>
    <property type="match status" value="1"/>
</dbReference>
<dbReference type="PANTHER" id="PTHR30622:SF3">
    <property type="entry name" value="UNDECAPRENYL-DIPHOSPHATASE"/>
    <property type="match status" value="1"/>
</dbReference>
<dbReference type="Pfam" id="PF02673">
    <property type="entry name" value="BacA"/>
    <property type="match status" value="1"/>
</dbReference>
<evidence type="ECO:0000255" key="1">
    <source>
        <dbReference type="HAMAP-Rule" id="MF_01006"/>
    </source>
</evidence>
<feature type="chain" id="PRO_0000151195" description="Undecaprenyl-diphosphatase 2">
    <location>
        <begin position="1"/>
        <end position="267"/>
    </location>
</feature>
<feature type="transmembrane region" description="Helical" evidence="1">
    <location>
        <begin position="4"/>
        <end position="24"/>
    </location>
</feature>
<feature type="transmembrane region" description="Helical" evidence="1">
    <location>
        <begin position="43"/>
        <end position="63"/>
    </location>
</feature>
<feature type="transmembrane region" description="Helical" evidence="1">
    <location>
        <begin position="84"/>
        <end position="104"/>
    </location>
</feature>
<feature type="transmembrane region" description="Helical" evidence="1">
    <location>
        <begin position="109"/>
        <end position="129"/>
    </location>
</feature>
<feature type="transmembrane region" description="Helical" evidence="1">
    <location>
        <begin position="147"/>
        <end position="167"/>
    </location>
</feature>
<feature type="transmembrane region" description="Helical" evidence="1">
    <location>
        <begin position="186"/>
        <end position="206"/>
    </location>
</feature>
<feature type="transmembrane region" description="Helical" evidence="1">
    <location>
        <begin position="219"/>
        <end position="239"/>
    </location>
</feature>
<feature type="transmembrane region" description="Helical" evidence="1">
    <location>
        <begin position="243"/>
        <end position="263"/>
    </location>
</feature>
<keyword id="KW-0046">Antibiotic resistance</keyword>
<keyword id="KW-0997">Cell inner membrane</keyword>
<keyword id="KW-1003">Cell membrane</keyword>
<keyword id="KW-0133">Cell shape</keyword>
<keyword id="KW-0961">Cell wall biogenesis/degradation</keyword>
<keyword id="KW-0378">Hydrolase</keyword>
<keyword id="KW-0472">Membrane</keyword>
<keyword id="KW-0573">Peptidoglycan synthesis</keyword>
<keyword id="KW-1185">Reference proteome</keyword>
<keyword id="KW-0812">Transmembrane</keyword>
<keyword id="KW-1133">Transmembrane helix</keyword>
<reference key="1">
    <citation type="journal article" date="2002" name="Nat. Biotechnol.">
        <title>Genome sequence of the dissimilatory metal ion-reducing bacterium Shewanella oneidensis.</title>
        <authorList>
            <person name="Heidelberg J.F."/>
            <person name="Paulsen I.T."/>
            <person name="Nelson K.E."/>
            <person name="Gaidos E.J."/>
            <person name="Nelson W.C."/>
            <person name="Read T.D."/>
            <person name="Eisen J.A."/>
            <person name="Seshadri R."/>
            <person name="Ward N.L."/>
            <person name="Methe B.A."/>
            <person name="Clayton R.A."/>
            <person name="Meyer T."/>
            <person name="Tsapin A."/>
            <person name="Scott J."/>
            <person name="Beanan M.J."/>
            <person name="Brinkac L.M."/>
            <person name="Daugherty S.C."/>
            <person name="DeBoy R.T."/>
            <person name="Dodson R.J."/>
            <person name="Durkin A.S."/>
            <person name="Haft D.H."/>
            <person name="Kolonay J.F."/>
            <person name="Madupu R."/>
            <person name="Peterson J.D."/>
            <person name="Umayam L.A."/>
            <person name="White O."/>
            <person name="Wolf A.M."/>
            <person name="Vamathevan J.J."/>
            <person name="Weidman J.F."/>
            <person name="Impraim M."/>
            <person name="Lee K."/>
            <person name="Berry K.J."/>
            <person name="Lee C."/>
            <person name="Mueller J."/>
            <person name="Khouri H.M."/>
            <person name="Gill J."/>
            <person name="Utterback T.R."/>
            <person name="McDonald L.A."/>
            <person name="Feldblyum T.V."/>
            <person name="Smith H.O."/>
            <person name="Venter J.C."/>
            <person name="Nealson K.H."/>
            <person name="Fraser C.M."/>
        </authorList>
    </citation>
    <scope>NUCLEOTIDE SEQUENCE [LARGE SCALE GENOMIC DNA]</scope>
    <source>
        <strain>ATCC 700550 / JCM 31522 / CIP 106686 / LMG 19005 / NCIMB 14063 / MR-1</strain>
    </source>
</reference>
<organism>
    <name type="scientific">Shewanella oneidensis (strain ATCC 700550 / JCM 31522 / CIP 106686 / LMG 19005 / NCIMB 14063 / MR-1)</name>
    <dbReference type="NCBI Taxonomy" id="211586"/>
    <lineage>
        <taxon>Bacteria</taxon>
        <taxon>Pseudomonadati</taxon>
        <taxon>Pseudomonadota</taxon>
        <taxon>Gammaproteobacteria</taxon>
        <taxon>Alteromonadales</taxon>
        <taxon>Shewanellaceae</taxon>
        <taxon>Shewanella</taxon>
    </lineage>
</organism>
<comment type="function">
    <text evidence="1">Catalyzes the dephosphorylation of undecaprenyl diphosphate (UPP). Confers resistance to bacitracin.</text>
</comment>
<comment type="catalytic activity">
    <reaction evidence="1">
        <text>di-trans,octa-cis-undecaprenyl diphosphate + H2O = di-trans,octa-cis-undecaprenyl phosphate + phosphate + H(+)</text>
        <dbReference type="Rhea" id="RHEA:28094"/>
        <dbReference type="ChEBI" id="CHEBI:15377"/>
        <dbReference type="ChEBI" id="CHEBI:15378"/>
        <dbReference type="ChEBI" id="CHEBI:43474"/>
        <dbReference type="ChEBI" id="CHEBI:58405"/>
        <dbReference type="ChEBI" id="CHEBI:60392"/>
        <dbReference type="EC" id="3.6.1.27"/>
    </reaction>
</comment>
<comment type="subcellular location">
    <subcellularLocation>
        <location evidence="1">Cell inner membrane</location>
        <topology evidence="1">Multi-pass membrane protein</topology>
    </subcellularLocation>
</comment>
<comment type="miscellaneous">
    <text>Bacitracin is thought to be involved in the inhibition of peptidoglycan synthesis by sequestering undecaprenyl diphosphate, thereby reducing the pool of lipid carrier available.</text>
</comment>
<comment type="similarity">
    <text evidence="1">Belongs to the UppP family.</text>
</comment>